<gene>
    <name type="primary">ZNF486</name>
    <name type="synonym">KRBO2</name>
</gene>
<reference key="1">
    <citation type="journal article" date="2004" name="Nature">
        <title>The DNA sequence and biology of human chromosome 19.</title>
        <authorList>
            <person name="Grimwood J."/>
            <person name="Gordon L.A."/>
            <person name="Olsen A.S."/>
            <person name="Terry A."/>
            <person name="Schmutz J."/>
            <person name="Lamerdin J.E."/>
            <person name="Hellsten U."/>
            <person name="Goodstein D."/>
            <person name="Couronne O."/>
            <person name="Tran-Gyamfi M."/>
            <person name="Aerts A."/>
            <person name="Altherr M."/>
            <person name="Ashworth L."/>
            <person name="Bajorek E."/>
            <person name="Black S."/>
            <person name="Branscomb E."/>
            <person name="Caenepeel S."/>
            <person name="Carrano A.V."/>
            <person name="Caoile C."/>
            <person name="Chan Y.M."/>
            <person name="Christensen M."/>
            <person name="Cleland C.A."/>
            <person name="Copeland A."/>
            <person name="Dalin E."/>
            <person name="Dehal P."/>
            <person name="Denys M."/>
            <person name="Detter J.C."/>
            <person name="Escobar J."/>
            <person name="Flowers D."/>
            <person name="Fotopulos D."/>
            <person name="Garcia C."/>
            <person name="Georgescu A.M."/>
            <person name="Glavina T."/>
            <person name="Gomez M."/>
            <person name="Gonzales E."/>
            <person name="Groza M."/>
            <person name="Hammon N."/>
            <person name="Hawkins T."/>
            <person name="Haydu L."/>
            <person name="Ho I."/>
            <person name="Huang W."/>
            <person name="Israni S."/>
            <person name="Jett J."/>
            <person name="Kadner K."/>
            <person name="Kimball H."/>
            <person name="Kobayashi A."/>
            <person name="Larionov V."/>
            <person name="Leem S.-H."/>
            <person name="Lopez F."/>
            <person name="Lou Y."/>
            <person name="Lowry S."/>
            <person name="Malfatti S."/>
            <person name="Martinez D."/>
            <person name="McCready P.M."/>
            <person name="Medina C."/>
            <person name="Morgan J."/>
            <person name="Nelson K."/>
            <person name="Nolan M."/>
            <person name="Ovcharenko I."/>
            <person name="Pitluck S."/>
            <person name="Pollard M."/>
            <person name="Popkie A.P."/>
            <person name="Predki P."/>
            <person name="Quan G."/>
            <person name="Ramirez L."/>
            <person name="Rash S."/>
            <person name="Retterer J."/>
            <person name="Rodriguez A."/>
            <person name="Rogers S."/>
            <person name="Salamov A."/>
            <person name="Salazar A."/>
            <person name="She X."/>
            <person name="Smith D."/>
            <person name="Slezak T."/>
            <person name="Solovyev V."/>
            <person name="Thayer N."/>
            <person name="Tice H."/>
            <person name="Tsai M."/>
            <person name="Ustaszewska A."/>
            <person name="Vo N."/>
            <person name="Wagner M."/>
            <person name="Wheeler J."/>
            <person name="Wu K."/>
            <person name="Xie G."/>
            <person name="Yang J."/>
            <person name="Dubchak I."/>
            <person name="Furey T.S."/>
            <person name="DeJong P."/>
            <person name="Dickson M."/>
            <person name="Gordon D."/>
            <person name="Eichler E.E."/>
            <person name="Pennacchio L.A."/>
            <person name="Richardson P."/>
            <person name="Stubbs L."/>
            <person name="Rokhsar D.S."/>
            <person name="Myers R.M."/>
            <person name="Rubin E.M."/>
            <person name="Lucas S.M."/>
        </authorList>
    </citation>
    <scope>NUCLEOTIDE SEQUENCE [LARGE SCALE GENOMIC DNA]</scope>
</reference>
<reference key="2">
    <citation type="journal article" date="2004" name="Genome Res.">
        <title>The status, quality, and expansion of the NIH full-length cDNA project: the Mammalian Gene Collection (MGC).</title>
        <authorList>
            <consortium name="The MGC Project Team"/>
        </authorList>
    </citation>
    <scope>NUCLEOTIDE SEQUENCE [LARGE SCALE MRNA]</scope>
    <source>
        <tissue>Lung</tissue>
    </source>
</reference>
<organism>
    <name type="scientific">Homo sapiens</name>
    <name type="common">Human</name>
    <dbReference type="NCBI Taxonomy" id="9606"/>
    <lineage>
        <taxon>Eukaryota</taxon>
        <taxon>Metazoa</taxon>
        <taxon>Chordata</taxon>
        <taxon>Craniata</taxon>
        <taxon>Vertebrata</taxon>
        <taxon>Euteleostomi</taxon>
        <taxon>Mammalia</taxon>
        <taxon>Eutheria</taxon>
        <taxon>Euarchontoglires</taxon>
        <taxon>Primates</taxon>
        <taxon>Haplorrhini</taxon>
        <taxon>Catarrhini</taxon>
        <taxon>Hominidae</taxon>
        <taxon>Homo</taxon>
    </lineage>
</organism>
<dbReference type="EMBL" id="AC011447">
    <property type="status" value="NOT_ANNOTATED_CDS"/>
    <property type="molecule type" value="Genomic_DNA"/>
</dbReference>
<dbReference type="EMBL" id="CH471106">
    <property type="protein sequence ID" value="EAW84874.1"/>
    <property type="molecule type" value="Genomic_DNA"/>
</dbReference>
<dbReference type="EMBL" id="BC008936">
    <property type="protein sequence ID" value="AAH08936.2"/>
    <property type="status" value="ALT_SEQ"/>
    <property type="molecule type" value="mRNA"/>
</dbReference>
<dbReference type="EMBL" id="BC117268">
    <property type="protein sequence ID" value="AAI17269.1"/>
    <property type="molecule type" value="mRNA"/>
</dbReference>
<dbReference type="CCDS" id="CCDS46029.1"/>
<dbReference type="RefSeq" id="NP_443084.2">
    <property type="nucleotide sequence ID" value="NM_052852.3"/>
</dbReference>
<dbReference type="SMR" id="Q96H40"/>
<dbReference type="BioGRID" id="124749">
    <property type="interactions" value="3"/>
</dbReference>
<dbReference type="FunCoup" id="Q96H40">
    <property type="interactions" value="44"/>
</dbReference>
<dbReference type="STRING" id="9606.ENSP00000335042"/>
<dbReference type="iPTMnet" id="Q96H40"/>
<dbReference type="PhosphoSitePlus" id="Q96H40"/>
<dbReference type="BioMuta" id="ZNF486"/>
<dbReference type="DMDM" id="325511409"/>
<dbReference type="jPOST" id="Q96H40"/>
<dbReference type="MassIVE" id="Q96H40"/>
<dbReference type="PaxDb" id="9606-ENSP00000335042"/>
<dbReference type="PeptideAtlas" id="Q96H40"/>
<dbReference type="ProteomicsDB" id="76700"/>
<dbReference type="Antibodypedia" id="56810">
    <property type="antibodies" value="82 antibodies from 19 providers"/>
</dbReference>
<dbReference type="DNASU" id="90649"/>
<dbReference type="Ensembl" id="ENST00000335117.9">
    <property type="protein sequence ID" value="ENSP00000335042.7"/>
    <property type="gene ID" value="ENSG00000256229.8"/>
</dbReference>
<dbReference type="GeneID" id="90649"/>
<dbReference type="KEGG" id="hsa:90649"/>
<dbReference type="MANE-Select" id="ENST00000335117.9">
    <property type="protein sequence ID" value="ENSP00000335042.7"/>
    <property type="RefSeq nucleotide sequence ID" value="NM_052852.4"/>
    <property type="RefSeq protein sequence ID" value="NP_443084.2"/>
</dbReference>
<dbReference type="UCSC" id="uc002nou.4">
    <property type="organism name" value="human"/>
</dbReference>
<dbReference type="AGR" id="HGNC:20807"/>
<dbReference type="CTD" id="90649"/>
<dbReference type="DisGeNET" id="90649"/>
<dbReference type="GeneCards" id="ZNF486"/>
<dbReference type="HGNC" id="HGNC:20807">
    <property type="gene designation" value="ZNF486"/>
</dbReference>
<dbReference type="HPA" id="ENSG00000256229">
    <property type="expression patterns" value="Tissue enhanced (thyroid)"/>
</dbReference>
<dbReference type="neXtProt" id="NX_Q96H40"/>
<dbReference type="OpenTargets" id="ENSG00000256229"/>
<dbReference type="PharmGKB" id="PA134919932"/>
<dbReference type="VEuPathDB" id="HostDB:ENSG00000256229"/>
<dbReference type="eggNOG" id="KOG1721">
    <property type="taxonomic scope" value="Eukaryota"/>
</dbReference>
<dbReference type="GeneTree" id="ENSGT00940000153236"/>
<dbReference type="HOGENOM" id="CLU_002678_44_0_1"/>
<dbReference type="InParanoid" id="Q96H40"/>
<dbReference type="OMA" id="VIMREFE"/>
<dbReference type="OrthoDB" id="6077919at2759"/>
<dbReference type="PAN-GO" id="Q96H40">
    <property type="GO annotations" value="3 GO annotations based on evolutionary models"/>
</dbReference>
<dbReference type="PhylomeDB" id="Q96H40"/>
<dbReference type="TreeFam" id="TF342117"/>
<dbReference type="PathwayCommons" id="Q96H40"/>
<dbReference type="Reactome" id="R-HSA-212436">
    <property type="pathway name" value="Generic Transcription Pathway"/>
</dbReference>
<dbReference type="BioGRID-ORCS" id="90649">
    <property type="hits" value="124 hits in 1110 CRISPR screens"/>
</dbReference>
<dbReference type="GenomeRNAi" id="90649"/>
<dbReference type="Pharos" id="Q96H40">
    <property type="development level" value="Tdark"/>
</dbReference>
<dbReference type="PRO" id="PR:Q96H40"/>
<dbReference type="Proteomes" id="UP000005640">
    <property type="component" value="Chromosome 19"/>
</dbReference>
<dbReference type="RNAct" id="Q96H40">
    <property type="molecule type" value="protein"/>
</dbReference>
<dbReference type="Bgee" id="ENSG00000256229">
    <property type="expression patterns" value="Expressed in buccal mucosa cell and 178 other cell types or tissues"/>
</dbReference>
<dbReference type="ExpressionAtlas" id="Q96H40">
    <property type="expression patterns" value="baseline and differential"/>
</dbReference>
<dbReference type="GO" id="GO:0070062">
    <property type="term" value="C:extracellular exosome"/>
    <property type="evidence" value="ECO:0007005"/>
    <property type="project" value="UniProtKB"/>
</dbReference>
<dbReference type="GO" id="GO:0005634">
    <property type="term" value="C:nucleus"/>
    <property type="evidence" value="ECO:0007669"/>
    <property type="project" value="UniProtKB-SubCell"/>
</dbReference>
<dbReference type="GO" id="GO:0000981">
    <property type="term" value="F:DNA-binding transcription factor activity, RNA polymerase II-specific"/>
    <property type="evidence" value="ECO:0000318"/>
    <property type="project" value="GO_Central"/>
</dbReference>
<dbReference type="GO" id="GO:0000978">
    <property type="term" value="F:RNA polymerase II cis-regulatory region sequence-specific DNA binding"/>
    <property type="evidence" value="ECO:0000318"/>
    <property type="project" value="GO_Central"/>
</dbReference>
<dbReference type="GO" id="GO:0008270">
    <property type="term" value="F:zinc ion binding"/>
    <property type="evidence" value="ECO:0007669"/>
    <property type="project" value="UniProtKB-KW"/>
</dbReference>
<dbReference type="GO" id="GO:0006355">
    <property type="term" value="P:regulation of DNA-templated transcription"/>
    <property type="evidence" value="ECO:0000318"/>
    <property type="project" value="GO_Central"/>
</dbReference>
<dbReference type="CDD" id="cd07765">
    <property type="entry name" value="KRAB_A-box"/>
    <property type="match status" value="1"/>
</dbReference>
<dbReference type="FunFam" id="3.30.160.60:FF:002472">
    <property type="match status" value="1"/>
</dbReference>
<dbReference type="FunFam" id="3.30.160.60:FF:002063">
    <property type="entry name" value="RB associated KRAB zinc finger"/>
    <property type="match status" value="1"/>
</dbReference>
<dbReference type="FunFam" id="3.30.160.60:FF:000034">
    <property type="entry name" value="zinc finger protein 25"/>
    <property type="match status" value="2"/>
</dbReference>
<dbReference type="FunFam" id="3.30.160.60:FF:000690">
    <property type="entry name" value="Zinc finger protein 354C"/>
    <property type="match status" value="1"/>
</dbReference>
<dbReference type="FunFam" id="3.30.160.60:FF:000120">
    <property type="entry name" value="Zinc finger protein 430"/>
    <property type="match status" value="2"/>
</dbReference>
<dbReference type="FunFam" id="3.30.160.60:FF:000672">
    <property type="entry name" value="Zinc finger protein 430"/>
    <property type="match status" value="2"/>
</dbReference>
<dbReference type="Gene3D" id="6.10.140.140">
    <property type="match status" value="1"/>
</dbReference>
<dbReference type="Gene3D" id="3.30.160.60">
    <property type="entry name" value="Classic Zinc Finger"/>
    <property type="match status" value="10"/>
</dbReference>
<dbReference type="InterPro" id="IPR001909">
    <property type="entry name" value="KRAB"/>
</dbReference>
<dbReference type="InterPro" id="IPR036051">
    <property type="entry name" value="KRAB_dom_sf"/>
</dbReference>
<dbReference type="InterPro" id="IPR036236">
    <property type="entry name" value="Znf_C2H2_sf"/>
</dbReference>
<dbReference type="InterPro" id="IPR013087">
    <property type="entry name" value="Znf_C2H2_type"/>
</dbReference>
<dbReference type="PANTHER" id="PTHR23235:SF178">
    <property type="entry name" value="C2H2-TYPE DOMAIN-CONTAINING PROTEIN-RELATED"/>
    <property type="match status" value="1"/>
</dbReference>
<dbReference type="PANTHER" id="PTHR23235">
    <property type="entry name" value="KRUEPPEL-LIKE TRANSCRIPTION FACTOR"/>
    <property type="match status" value="1"/>
</dbReference>
<dbReference type="Pfam" id="PF01352">
    <property type="entry name" value="KRAB"/>
    <property type="match status" value="1"/>
</dbReference>
<dbReference type="Pfam" id="PF00096">
    <property type="entry name" value="zf-C2H2"/>
    <property type="match status" value="9"/>
</dbReference>
<dbReference type="SMART" id="SM00349">
    <property type="entry name" value="KRAB"/>
    <property type="match status" value="1"/>
</dbReference>
<dbReference type="SMART" id="SM00355">
    <property type="entry name" value="ZnF_C2H2"/>
    <property type="match status" value="10"/>
</dbReference>
<dbReference type="SUPFAM" id="SSF57667">
    <property type="entry name" value="beta-beta-alpha zinc fingers"/>
    <property type="match status" value="6"/>
</dbReference>
<dbReference type="SUPFAM" id="SSF109640">
    <property type="entry name" value="KRAB domain (Kruppel-associated box)"/>
    <property type="match status" value="1"/>
</dbReference>
<dbReference type="PROSITE" id="PS50805">
    <property type="entry name" value="KRAB"/>
    <property type="match status" value="1"/>
</dbReference>
<dbReference type="PROSITE" id="PS00028">
    <property type="entry name" value="ZINC_FINGER_C2H2_1"/>
    <property type="match status" value="9"/>
</dbReference>
<dbReference type="PROSITE" id="PS50157">
    <property type="entry name" value="ZINC_FINGER_C2H2_2"/>
    <property type="match status" value="10"/>
</dbReference>
<accession>Q96H40</accession>
<accession>Q0VG00</accession>
<feature type="chain" id="PRO_0000047611" description="Zinc finger protein 486">
    <location>
        <begin position="1"/>
        <end position="463"/>
    </location>
</feature>
<feature type="domain" description="KRAB" evidence="2">
    <location>
        <begin position="13"/>
        <end position="84"/>
    </location>
</feature>
<feature type="zinc finger region" description="C2H2-type 1; degenerate" evidence="1">
    <location>
        <begin position="154"/>
        <end position="176"/>
    </location>
</feature>
<feature type="zinc finger region" description="C2H2-type 2" evidence="1">
    <location>
        <begin position="210"/>
        <end position="232"/>
    </location>
</feature>
<feature type="zinc finger region" description="C2H2-type 3" evidence="1">
    <location>
        <begin position="238"/>
        <end position="260"/>
    </location>
</feature>
<feature type="zinc finger region" description="C2H2-type 4" evidence="1">
    <location>
        <begin position="266"/>
        <end position="288"/>
    </location>
</feature>
<feature type="zinc finger region" description="C2H2-type 5" evidence="1">
    <location>
        <begin position="294"/>
        <end position="316"/>
    </location>
</feature>
<feature type="zinc finger region" description="C2H2-type 6" evidence="1">
    <location>
        <begin position="322"/>
        <end position="344"/>
    </location>
</feature>
<feature type="zinc finger region" description="C2H2-type 7" evidence="1">
    <location>
        <begin position="350"/>
        <end position="372"/>
    </location>
</feature>
<feature type="zinc finger region" description="C2H2-type 8" evidence="1">
    <location>
        <begin position="378"/>
        <end position="400"/>
    </location>
</feature>
<feature type="zinc finger region" description="C2H2-type 9" evidence="1">
    <location>
        <begin position="406"/>
        <end position="428"/>
    </location>
</feature>
<feature type="zinc finger region" description="C2H2-type 10" evidence="1">
    <location>
        <begin position="434"/>
        <end position="456"/>
    </location>
</feature>
<keyword id="KW-0238">DNA-binding</keyword>
<keyword id="KW-0479">Metal-binding</keyword>
<keyword id="KW-0539">Nucleus</keyword>
<keyword id="KW-1267">Proteomics identification</keyword>
<keyword id="KW-1185">Reference proteome</keyword>
<keyword id="KW-0677">Repeat</keyword>
<keyword id="KW-0804">Transcription</keyword>
<keyword id="KW-0805">Transcription regulation</keyword>
<keyword id="KW-0862">Zinc</keyword>
<keyword id="KW-0863">Zinc-finger</keyword>
<evidence type="ECO:0000255" key="1">
    <source>
        <dbReference type="PROSITE-ProRule" id="PRU00042"/>
    </source>
</evidence>
<evidence type="ECO:0000255" key="2">
    <source>
        <dbReference type="PROSITE-ProRule" id="PRU00119"/>
    </source>
</evidence>
<evidence type="ECO:0000305" key="3"/>
<sequence>MPGPLRSLEMESLQFRDVAVEFSLEEWHCLDTAQQNLYRDVMLENYRHLVFLGIIVSKPDLITCLEQGIKPLTMKRHEMIAKPPVVCSHFAQDLWPEQSIKDSYQKVILRKFEKCGHGNLHFKKGCESVDECKLHKRGYNGLNQCLTTTQSKIFQCGKYVKVFHQFSNSKRHKRRHTEKKPLKYIEGDKAFNQSSTHTTHKKIDTGEKPYKCEECGKAFNRSSHLTTHKITHTREKPYKCEECGKVFKYFSSFTTHKKIHSGEKPYICEECGKAFMYPYTLTTHKIIHTGEQPYKCKECDKAFNHPATLSSHKKIHTGEKPYTCDKCGKAFISSSILSKHEKIHTGEKPYKCEECGKAFTRSSHLTMHKIIHTGEKPYKCEECGKAFTWSAGLHKHRRTHTGEKPYKCEECGKAYTTSSNLTEHKTTHTGEKPYKCKECGKAFNWSSDLNKHKRIHIGQKPRT</sequence>
<proteinExistence type="evidence at protein level"/>
<name>ZN486_HUMAN</name>
<protein>
    <recommendedName>
        <fullName>Zinc finger protein 486</fullName>
    </recommendedName>
    <alternativeName>
        <fullName>KRAB domain only protein 2</fullName>
    </alternativeName>
</protein>
<comment type="function">
    <text>May be involved in transcriptional regulation.</text>
</comment>
<comment type="subcellular location">
    <subcellularLocation>
        <location evidence="3">Nucleus</location>
    </subcellularLocation>
</comment>
<comment type="similarity">
    <text evidence="3">Belongs to the krueppel C2H2-type zinc-finger protein family.</text>
</comment>
<comment type="sequence caution" evidence="3">
    <conflict type="erroneous initiation">
        <sequence resource="EMBL-CDS" id="AAH08936"/>
    </conflict>
    <text>Extended N-terminus.</text>
</comment>
<comment type="sequence caution" evidence="3">
    <conflict type="miscellaneous discrepancy">
        <sequence resource="EMBL-CDS" id="AAH08936"/>
    </conflict>
    <text>Aberrant splicing.</text>
</comment>